<evidence type="ECO:0000255" key="1">
    <source>
        <dbReference type="HAMAP-Rule" id="MF_00206"/>
    </source>
</evidence>
<evidence type="ECO:0000255" key="2">
    <source>
        <dbReference type="PROSITE-ProRule" id="PRU01266"/>
    </source>
</evidence>
<evidence type="ECO:0000256" key="3">
    <source>
        <dbReference type="SAM" id="MobiDB-lite"/>
    </source>
</evidence>
<gene>
    <name evidence="1" type="primary">lipA</name>
    <name type="ordered locus">BMASAVP1_A0218</name>
</gene>
<proteinExistence type="inferred from homology"/>
<dbReference type="EC" id="2.8.1.8" evidence="1"/>
<dbReference type="EMBL" id="CP000526">
    <property type="protein sequence ID" value="ABM50183.1"/>
    <property type="molecule type" value="Genomic_DNA"/>
</dbReference>
<dbReference type="RefSeq" id="WP_004189177.1">
    <property type="nucleotide sequence ID" value="NC_008785.1"/>
</dbReference>
<dbReference type="SMR" id="A1V016"/>
<dbReference type="GeneID" id="92977834"/>
<dbReference type="KEGG" id="bmv:BMASAVP1_A0218"/>
<dbReference type="HOGENOM" id="CLU_033144_2_1_4"/>
<dbReference type="UniPathway" id="UPA00538">
    <property type="reaction ID" value="UER00593"/>
</dbReference>
<dbReference type="GO" id="GO:0005737">
    <property type="term" value="C:cytoplasm"/>
    <property type="evidence" value="ECO:0007669"/>
    <property type="project" value="UniProtKB-SubCell"/>
</dbReference>
<dbReference type="GO" id="GO:0051539">
    <property type="term" value="F:4 iron, 4 sulfur cluster binding"/>
    <property type="evidence" value="ECO:0007669"/>
    <property type="project" value="UniProtKB-UniRule"/>
</dbReference>
<dbReference type="GO" id="GO:0016992">
    <property type="term" value="F:lipoate synthase activity"/>
    <property type="evidence" value="ECO:0007669"/>
    <property type="project" value="UniProtKB-UniRule"/>
</dbReference>
<dbReference type="GO" id="GO:0046872">
    <property type="term" value="F:metal ion binding"/>
    <property type="evidence" value="ECO:0007669"/>
    <property type="project" value="UniProtKB-KW"/>
</dbReference>
<dbReference type="CDD" id="cd01335">
    <property type="entry name" value="Radical_SAM"/>
    <property type="match status" value="1"/>
</dbReference>
<dbReference type="FunFam" id="3.20.20.70:FF:000040">
    <property type="entry name" value="Lipoyl synthase"/>
    <property type="match status" value="1"/>
</dbReference>
<dbReference type="Gene3D" id="3.20.20.70">
    <property type="entry name" value="Aldolase class I"/>
    <property type="match status" value="1"/>
</dbReference>
<dbReference type="HAMAP" id="MF_00206">
    <property type="entry name" value="Lipoyl_synth"/>
    <property type="match status" value="1"/>
</dbReference>
<dbReference type="InterPro" id="IPR013785">
    <property type="entry name" value="Aldolase_TIM"/>
</dbReference>
<dbReference type="InterPro" id="IPR006638">
    <property type="entry name" value="Elp3/MiaA/NifB-like_rSAM"/>
</dbReference>
<dbReference type="InterPro" id="IPR031691">
    <property type="entry name" value="LIAS_N"/>
</dbReference>
<dbReference type="InterPro" id="IPR003698">
    <property type="entry name" value="Lipoyl_synth"/>
</dbReference>
<dbReference type="InterPro" id="IPR007197">
    <property type="entry name" value="rSAM"/>
</dbReference>
<dbReference type="NCBIfam" id="TIGR00510">
    <property type="entry name" value="lipA"/>
    <property type="match status" value="1"/>
</dbReference>
<dbReference type="NCBIfam" id="NF004019">
    <property type="entry name" value="PRK05481.1"/>
    <property type="match status" value="1"/>
</dbReference>
<dbReference type="NCBIfam" id="NF009544">
    <property type="entry name" value="PRK12928.1"/>
    <property type="match status" value="1"/>
</dbReference>
<dbReference type="PANTHER" id="PTHR10949">
    <property type="entry name" value="LIPOYL SYNTHASE"/>
    <property type="match status" value="1"/>
</dbReference>
<dbReference type="PANTHER" id="PTHR10949:SF0">
    <property type="entry name" value="LIPOYL SYNTHASE, MITOCHONDRIAL"/>
    <property type="match status" value="1"/>
</dbReference>
<dbReference type="Pfam" id="PF16881">
    <property type="entry name" value="LIAS_N"/>
    <property type="match status" value="1"/>
</dbReference>
<dbReference type="Pfam" id="PF04055">
    <property type="entry name" value="Radical_SAM"/>
    <property type="match status" value="1"/>
</dbReference>
<dbReference type="PIRSF" id="PIRSF005963">
    <property type="entry name" value="Lipoyl_synth"/>
    <property type="match status" value="1"/>
</dbReference>
<dbReference type="SFLD" id="SFLDF00271">
    <property type="entry name" value="lipoyl_synthase"/>
    <property type="match status" value="1"/>
</dbReference>
<dbReference type="SFLD" id="SFLDG01058">
    <property type="entry name" value="lipoyl_synthase_like"/>
    <property type="match status" value="1"/>
</dbReference>
<dbReference type="SMART" id="SM00729">
    <property type="entry name" value="Elp3"/>
    <property type="match status" value="1"/>
</dbReference>
<dbReference type="SUPFAM" id="SSF102114">
    <property type="entry name" value="Radical SAM enzymes"/>
    <property type="match status" value="1"/>
</dbReference>
<dbReference type="PROSITE" id="PS51918">
    <property type="entry name" value="RADICAL_SAM"/>
    <property type="match status" value="1"/>
</dbReference>
<sequence length="329" mass="36459">MTDLTATPAPAEPAASAYDPTAKQKAQAKTARIPIKIVPIEKLKKPEWIRVKAATSSSRFNEIKTILREHNLHTVCEEASCPNIGECFGKGTATFMIMGDKCTRRCPFCDVGHGRPDPLDADEPKNLARTIAALKLKYVVITSVDRDDLRDGGAGHFVECIREVREQSPATRIEILTPDFRGRLDRALAILNAAPPDVMNHNLETVPRLYKEARPGSDYAHSLKLLKDFKALHPDVATKSGLMVGLGETTDEILQVMRDLRAHDVDMLTIGQYLQPSEHHLPVREYVHPDTFKMYEEEAYKMGFTHAAVGAMVRSSYHADLQAHGAGVV</sequence>
<accession>A1V016</accession>
<name>LIPA_BURMS</name>
<reference key="1">
    <citation type="journal article" date="2010" name="Genome Biol. Evol.">
        <title>Continuing evolution of Burkholderia mallei through genome reduction and large-scale rearrangements.</title>
        <authorList>
            <person name="Losada L."/>
            <person name="Ronning C.M."/>
            <person name="DeShazer D."/>
            <person name="Woods D."/>
            <person name="Fedorova N."/>
            <person name="Kim H.S."/>
            <person name="Shabalina S.A."/>
            <person name="Pearson T.R."/>
            <person name="Brinkac L."/>
            <person name="Tan P."/>
            <person name="Nandi T."/>
            <person name="Crabtree J."/>
            <person name="Badger J."/>
            <person name="Beckstrom-Sternberg S."/>
            <person name="Saqib M."/>
            <person name="Schutzer S.E."/>
            <person name="Keim P."/>
            <person name="Nierman W.C."/>
        </authorList>
    </citation>
    <scope>NUCLEOTIDE SEQUENCE [LARGE SCALE GENOMIC DNA]</scope>
    <source>
        <strain>SAVP1</strain>
    </source>
</reference>
<feature type="chain" id="PRO_1000012200" description="Lipoyl synthase">
    <location>
        <begin position="1"/>
        <end position="329"/>
    </location>
</feature>
<feature type="domain" description="Radical SAM core" evidence="2">
    <location>
        <begin position="87"/>
        <end position="305"/>
    </location>
</feature>
<feature type="region of interest" description="Disordered" evidence="3">
    <location>
        <begin position="1"/>
        <end position="23"/>
    </location>
</feature>
<feature type="binding site" evidence="1">
    <location>
        <position position="76"/>
    </location>
    <ligand>
        <name>[4Fe-4S] cluster</name>
        <dbReference type="ChEBI" id="CHEBI:49883"/>
        <label>1</label>
    </ligand>
</feature>
<feature type="binding site" evidence="1">
    <location>
        <position position="81"/>
    </location>
    <ligand>
        <name>[4Fe-4S] cluster</name>
        <dbReference type="ChEBI" id="CHEBI:49883"/>
        <label>1</label>
    </ligand>
</feature>
<feature type="binding site" evidence="1">
    <location>
        <position position="87"/>
    </location>
    <ligand>
        <name>[4Fe-4S] cluster</name>
        <dbReference type="ChEBI" id="CHEBI:49883"/>
        <label>1</label>
    </ligand>
</feature>
<feature type="binding site" evidence="1">
    <location>
        <position position="102"/>
    </location>
    <ligand>
        <name>[4Fe-4S] cluster</name>
        <dbReference type="ChEBI" id="CHEBI:49883"/>
        <label>2</label>
        <note>4Fe-4S-S-AdoMet</note>
    </ligand>
</feature>
<feature type="binding site" evidence="1">
    <location>
        <position position="106"/>
    </location>
    <ligand>
        <name>[4Fe-4S] cluster</name>
        <dbReference type="ChEBI" id="CHEBI:49883"/>
        <label>2</label>
        <note>4Fe-4S-S-AdoMet</note>
    </ligand>
</feature>
<feature type="binding site" evidence="1">
    <location>
        <position position="109"/>
    </location>
    <ligand>
        <name>[4Fe-4S] cluster</name>
        <dbReference type="ChEBI" id="CHEBI:49883"/>
        <label>2</label>
        <note>4Fe-4S-S-AdoMet</note>
    </ligand>
</feature>
<feature type="binding site" evidence="1">
    <location>
        <position position="316"/>
    </location>
    <ligand>
        <name>[4Fe-4S] cluster</name>
        <dbReference type="ChEBI" id="CHEBI:49883"/>
        <label>1</label>
    </ligand>
</feature>
<keyword id="KW-0004">4Fe-4S</keyword>
<keyword id="KW-0963">Cytoplasm</keyword>
<keyword id="KW-0408">Iron</keyword>
<keyword id="KW-0411">Iron-sulfur</keyword>
<keyword id="KW-0479">Metal-binding</keyword>
<keyword id="KW-0949">S-adenosyl-L-methionine</keyword>
<keyword id="KW-0808">Transferase</keyword>
<comment type="function">
    <text evidence="1">Catalyzes the radical-mediated insertion of two sulfur atoms into the C-6 and C-8 positions of the octanoyl moiety bound to the lipoyl domains of lipoate-dependent enzymes, thereby converting the octanoylated domains into lipoylated derivatives.</text>
</comment>
<comment type="catalytic activity">
    <reaction evidence="1">
        <text>[[Fe-S] cluster scaffold protein carrying a second [4Fe-4S](2+) cluster] + N(6)-octanoyl-L-lysyl-[protein] + 2 oxidized [2Fe-2S]-[ferredoxin] + 2 S-adenosyl-L-methionine + 4 H(+) = [[Fe-S] cluster scaffold protein] + N(6)-[(R)-dihydrolipoyl]-L-lysyl-[protein] + 4 Fe(3+) + 2 hydrogen sulfide + 2 5'-deoxyadenosine + 2 L-methionine + 2 reduced [2Fe-2S]-[ferredoxin]</text>
        <dbReference type="Rhea" id="RHEA:16585"/>
        <dbReference type="Rhea" id="RHEA-COMP:9928"/>
        <dbReference type="Rhea" id="RHEA-COMP:10000"/>
        <dbReference type="Rhea" id="RHEA-COMP:10001"/>
        <dbReference type="Rhea" id="RHEA-COMP:10475"/>
        <dbReference type="Rhea" id="RHEA-COMP:14568"/>
        <dbReference type="Rhea" id="RHEA-COMP:14569"/>
        <dbReference type="ChEBI" id="CHEBI:15378"/>
        <dbReference type="ChEBI" id="CHEBI:17319"/>
        <dbReference type="ChEBI" id="CHEBI:29034"/>
        <dbReference type="ChEBI" id="CHEBI:29919"/>
        <dbReference type="ChEBI" id="CHEBI:33722"/>
        <dbReference type="ChEBI" id="CHEBI:33737"/>
        <dbReference type="ChEBI" id="CHEBI:33738"/>
        <dbReference type="ChEBI" id="CHEBI:57844"/>
        <dbReference type="ChEBI" id="CHEBI:59789"/>
        <dbReference type="ChEBI" id="CHEBI:78809"/>
        <dbReference type="ChEBI" id="CHEBI:83100"/>
        <dbReference type="EC" id="2.8.1.8"/>
    </reaction>
</comment>
<comment type="cofactor">
    <cofactor evidence="1">
        <name>[4Fe-4S] cluster</name>
        <dbReference type="ChEBI" id="CHEBI:49883"/>
    </cofactor>
    <text evidence="1">Binds 2 [4Fe-4S] clusters per subunit. One cluster is coordinated with 3 cysteines and an exchangeable S-adenosyl-L-methionine.</text>
</comment>
<comment type="pathway">
    <text evidence="1">Protein modification; protein lipoylation via endogenous pathway; protein N(6)-(lipoyl)lysine from octanoyl-[acyl-carrier-protein]: step 2/2.</text>
</comment>
<comment type="subcellular location">
    <subcellularLocation>
        <location evidence="1">Cytoplasm</location>
    </subcellularLocation>
</comment>
<comment type="similarity">
    <text evidence="1">Belongs to the radical SAM superfamily. Lipoyl synthase family.</text>
</comment>
<protein>
    <recommendedName>
        <fullName evidence="1">Lipoyl synthase</fullName>
        <ecNumber evidence="1">2.8.1.8</ecNumber>
    </recommendedName>
    <alternativeName>
        <fullName evidence="1">Lip-syn</fullName>
        <shortName evidence="1">LS</shortName>
    </alternativeName>
    <alternativeName>
        <fullName evidence="1">Lipoate synthase</fullName>
    </alternativeName>
    <alternativeName>
        <fullName evidence="1">Lipoic acid synthase</fullName>
    </alternativeName>
    <alternativeName>
        <fullName evidence="1">Sulfur insertion protein LipA</fullName>
    </alternativeName>
</protein>
<organism>
    <name type="scientific">Burkholderia mallei (strain SAVP1)</name>
    <dbReference type="NCBI Taxonomy" id="320388"/>
    <lineage>
        <taxon>Bacteria</taxon>
        <taxon>Pseudomonadati</taxon>
        <taxon>Pseudomonadota</taxon>
        <taxon>Betaproteobacteria</taxon>
        <taxon>Burkholderiales</taxon>
        <taxon>Burkholderiaceae</taxon>
        <taxon>Burkholderia</taxon>
        <taxon>pseudomallei group</taxon>
    </lineage>
</organism>